<protein>
    <recommendedName>
        <fullName evidence="2">PCNA-associated factor</fullName>
    </recommendedName>
    <alternativeName>
        <fullName>PCNA-associated factor of 15 kDa</fullName>
        <shortName>PAF15</shortName>
        <shortName>p15PAF</shortName>
    </alternativeName>
    <alternativeName>
        <fullName evidence="2">PCNA-clamp-associated factor</fullName>
    </alternativeName>
</protein>
<accession>Q5E9B2</accession>
<proteinExistence type="inferred from homology"/>
<dbReference type="EMBL" id="BT021008">
    <property type="protein sequence ID" value="AAX09025.1"/>
    <property type="molecule type" value="mRNA"/>
</dbReference>
<dbReference type="EMBL" id="BC102403">
    <property type="protein sequence ID" value="AAI02404.1"/>
    <property type="molecule type" value="mRNA"/>
</dbReference>
<dbReference type="RefSeq" id="NP_001015678.1">
    <property type="nucleotide sequence ID" value="NM_001015678.2"/>
</dbReference>
<dbReference type="FunCoup" id="Q5E9B2">
    <property type="interactions" value="698"/>
</dbReference>
<dbReference type="STRING" id="9913.ENSBTAP00000051194"/>
<dbReference type="PaxDb" id="9913-ENSBTAP00000051194"/>
<dbReference type="GeneID" id="540737"/>
<dbReference type="KEGG" id="bta:540737"/>
<dbReference type="CTD" id="9768"/>
<dbReference type="VEuPathDB" id="HostDB:ENSBTAG00000039462"/>
<dbReference type="eggNOG" id="ENOG502S3UM">
    <property type="taxonomic scope" value="Eukaryota"/>
</dbReference>
<dbReference type="HOGENOM" id="CLU_142343_0_0_1"/>
<dbReference type="InParanoid" id="Q5E9B2"/>
<dbReference type="OMA" id="QPDHTDE"/>
<dbReference type="OrthoDB" id="7479084at2759"/>
<dbReference type="TreeFam" id="TF333199"/>
<dbReference type="Reactome" id="R-BTA-5656169">
    <property type="pathway name" value="Termination of translesion DNA synthesis"/>
</dbReference>
<dbReference type="Proteomes" id="UP000009136">
    <property type="component" value="Chromosome 10"/>
</dbReference>
<dbReference type="Bgee" id="ENSBTAG00000039462">
    <property type="expression patterns" value="Expressed in pharyngeal tonsil and 96 other cell types or tissues"/>
</dbReference>
<dbReference type="GO" id="GO:0005634">
    <property type="term" value="C:nucleus"/>
    <property type="evidence" value="ECO:0000250"/>
    <property type="project" value="UniProtKB"/>
</dbReference>
<dbReference type="GO" id="GO:0048471">
    <property type="term" value="C:perinuclear region of cytoplasm"/>
    <property type="evidence" value="ECO:0000250"/>
    <property type="project" value="UniProtKB"/>
</dbReference>
<dbReference type="GO" id="GO:0003682">
    <property type="term" value="F:chromatin binding"/>
    <property type="evidence" value="ECO:0000250"/>
    <property type="project" value="UniProtKB"/>
</dbReference>
<dbReference type="GO" id="GO:0007098">
    <property type="term" value="P:centrosome cycle"/>
    <property type="evidence" value="ECO:0000250"/>
    <property type="project" value="UniProtKB"/>
</dbReference>
<dbReference type="GO" id="GO:0006974">
    <property type="term" value="P:DNA damage response"/>
    <property type="evidence" value="ECO:0000250"/>
    <property type="project" value="UniProtKB"/>
</dbReference>
<dbReference type="GO" id="GO:0006260">
    <property type="term" value="P:DNA replication"/>
    <property type="evidence" value="ECO:0000250"/>
    <property type="project" value="UniProtKB"/>
</dbReference>
<dbReference type="GO" id="GO:0051726">
    <property type="term" value="P:regulation of cell cycle"/>
    <property type="evidence" value="ECO:0000250"/>
    <property type="project" value="UniProtKB"/>
</dbReference>
<dbReference type="GO" id="GO:0009411">
    <property type="term" value="P:response to UV"/>
    <property type="evidence" value="ECO:0000250"/>
    <property type="project" value="UniProtKB"/>
</dbReference>
<dbReference type="GO" id="GO:0019985">
    <property type="term" value="P:translesion synthesis"/>
    <property type="evidence" value="ECO:0000250"/>
    <property type="project" value="UniProtKB"/>
</dbReference>
<dbReference type="InterPro" id="IPR040444">
    <property type="entry name" value="PCNA-AF"/>
</dbReference>
<dbReference type="InterPro" id="IPR031444">
    <property type="entry name" value="PCNA-AF_dom"/>
</dbReference>
<dbReference type="PANTHER" id="PTHR15679">
    <property type="entry name" value="PCNA-ASSOCIATED FACTOR"/>
    <property type="match status" value="1"/>
</dbReference>
<dbReference type="PANTHER" id="PTHR15679:SF8">
    <property type="entry name" value="PCNA-ASSOCIATED FACTOR"/>
    <property type="match status" value="1"/>
</dbReference>
<dbReference type="Pfam" id="PF15715">
    <property type="entry name" value="PAF"/>
    <property type="match status" value="1"/>
</dbReference>
<comment type="function">
    <text evidence="1">PCNA-binding protein that acts as a regulator of DNA repair during DNA replication. Following DNA damage, the interaction with PCNA is disrupted, facilitating the interaction between monoubiquitinated PCNA and the translesion DNA synthesis DNA polymerase eta (POLH) at stalled replisomes, facilitating the bypass of replication-fork-blocking lesions. Also acts as a regulator of centrosome number (By similarity).</text>
</comment>
<comment type="subunit">
    <text evidence="1">Interacts (when monoubiquitinated at Lys-15 and Lys-24) with PCNA. Interacts with isoform 2/p33ING1b of ING1. Interacts with BRCA1 (By similarity).</text>
</comment>
<comment type="subcellular location">
    <subcellularLocation>
        <location evidence="2">Nucleus</location>
    </subcellularLocation>
    <subcellularLocation>
        <location evidence="2">Cytoplasm</location>
        <location evidence="2">Perinuclear region</location>
    </subcellularLocation>
    <text evidence="2">Following DNA damage, localizes to DNA damage sites. Colocalizes with centrosomes in perinuclear region.</text>
</comment>
<comment type="domain">
    <text evidence="1">The PIP-box mediates the interaction with PCNA.</text>
</comment>
<comment type="domain">
    <text evidence="1">The KEN box is required for the association with the APC/C complex.</text>
</comment>
<comment type="domain">
    <text evidence="1">The D-box (destruction box) mediates the interaction with APC/C proteins, and acts as a recognition signal for degradation via the ubiquitin-proteasome pathway.</text>
</comment>
<comment type="domain">
    <text evidence="1">The initiation motif is required for efficient chain initiation by the APC/C complex E2 ligase UBE2C. It determines the rate of substrate's degradation without affecting its affinity for the APC/C, a mechanism used by the APC/C to control the timing of substrate proteolysis during the cell cycle (By similarity).</text>
</comment>
<comment type="PTM">
    <text evidence="1">Monoubiquitinated at Lys-15 and Lys-24 during normal S phase, promoting its association with PCNA. Also diubiquitinated at these 2 sites. Following DNA damage, monoubiquitin chains at Lys-15 and Lys-24 are probably extended, leading to disrupt the interaction with PCNA. Polyubiquitinated by the APC/C complex at the mitotic exit, leading to its degradation by the proteasome (By similarity).</text>
</comment>
<gene>
    <name evidence="2" type="primary">PCLAF</name>
    <name type="synonym">PAF</name>
</gene>
<organism>
    <name type="scientific">Bos taurus</name>
    <name type="common">Bovine</name>
    <dbReference type="NCBI Taxonomy" id="9913"/>
    <lineage>
        <taxon>Eukaryota</taxon>
        <taxon>Metazoa</taxon>
        <taxon>Chordata</taxon>
        <taxon>Craniata</taxon>
        <taxon>Vertebrata</taxon>
        <taxon>Euteleostomi</taxon>
        <taxon>Mammalia</taxon>
        <taxon>Eutheria</taxon>
        <taxon>Laurasiatheria</taxon>
        <taxon>Artiodactyla</taxon>
        <taxon>Ruminantia</taxon>
        <taxon>Pecora</taxon>
        <taxon>Bovidae</taxon>
        <taxon>Bovinae</taxon>
        <taxon>Bos</taxon>
    </lineage>
</organism>
<feature type="chain" id="PRO_0000284064" description="PCNA-associated factor">
    <location>
        <begin position="1"/>
        <end position="111"/>
    </location>
</feature>
<feature type="region of interest" description="Disordered" evidence="4">
    <location>
        <begin position="1"/>
        <end position="111"/>
    </location>
</feature>
<feature type="short sequence motif" description="D-box">
    <location>
        <begin position="23"/>
        <end position="34"/>
    </location>
</feature>
<feature type="short sequence motif" description="PIP-box">
    <location>
        <begin position="62"/>
        <end position="72"/>
    </location>
</feature>
<feature type="short sequence motif" description="KEN box">
    <location>
        <begin position="78"/>
        <end position="80"/>
    </location>
</feature>
<feature type="short sequence motif" description="Initiation motif">
    <location>
        <begin position="85"/>
        <end position="97"/>
    </location>
</feature>
<feature type="compositionally biased region" description="Polar residues" evidence="4">
    <location>
        <begin position="1"/>
        <end position="10"/>
    </location>
</feature>
<feature type="compositionally biased region" description="Polar residues" evidence="4">
    <location>
        <begin position="27"/>
        <end position="39"/>
    </location>
</feature>
<feature type="compositionally biased region" description="Basic and acidic residues" evidence="4">
    <location>
        <begin position="74"/>
        <end position="84"/>
    </location>
</feature>
<feature type="modified residue" description="Phosphoserine" evidence="2">
    <location>
        <position position="8"/>
    </location>
</feature>
<feature type="modified residue" description="N6-acetyllysine; alternate" evidence="3">
    <location>
        <position position="24"/>
    </location>
</feature>
<feature type="modified residue" description="Phosphoserine" evidence="2">
    <location>
        <position position="28"/>
    </location>
</feature>
<feature type="modified residue" description="Phosphoserine" evidence="2">
    <location>
        <position position="31"/>
    </location>
</feature>
<feature type="modified residue" description="Phosphoserine" evidence="2">
    <location>
        <position position="72"/>
    </location>
</feature>
<feature type="cross-link" description="Glycyl lysine isopeptide (Lys-Gly) (interchain with G-Cter in ubiquitin)" evidence="2">
    <location>
        <position position="15"/>
    </location>
</feature>
<feature type="cross-link" description="Glycyl lysine isopeptide (Lys-Gly) (interchain with G-Cter in ubiquitin); alternate" evidence="2">
    <location>
        <position position="24"/>
    </location>
</feature>
<evidence type="ECO:0000250" key="1"/>
<evidence type="ECO:0000250" key="2">
    <source>
        <dbReference type="UniProtKB" id="Q15004"/>
    </source>
</evidence>
<evidence type="ECO:0000250" key="3">
    <source>
        <dbReference type="UniProtKB" id="Q9CQX4"/>
    </source>
</evidence>
<evidence type="ECO:0000256" key="4">
    <source>
        <dbReference type="SAM" id="MobiDB-lite"/>
    </source>
</evidence>
<reference key="1">
    <citation type="journal article" date="2005" name="BMC Genomics">
        <title>Characterization of 954 bovine full-CDS cDNA sequences.</title>
        <authorList>
            <person name="Harhay G.P."/>
            <person name="Sonstegard T.S."/>
            <person name="Keele J.W."/>
            <person name="Heaton M.P."/>
            <person name="Clawson M.L."/>
            <person name="Snelling W.M."/>
            <person name="Wiedmann R.T."/>
            <person name="Van Tassell C.P."/>
            <person name="Smith T.P.L."/>
        </authorList>
    </citation>
    <scope>NUCLEOTIDE SEQUENCE [LARGE SCALE MRNA]</scope>
</reference>
<reference key="2">
    <citation type="submission" date="2005-08" db="EMBL/GenBank/DDBJ databases">
        <authorList>
            <consortium name="NIH - Mammalian Gene Collection (MGC) project"/>
        </authorList>
    </citation>
    <scope>NUCLEOTIDE SEQUENCE [LARGE SCALE MRNA]</scope>
    <source>
        <strain>Crossbred X Angus</strain>
        <tissue>Ileum</tissue>
    </source>
</reference>
<keyword id="KW-0007">Acetylation</keyword>
<keyword id="KW-0963">Cytoplasm</keyword>
<keyword id="KW-0227">DNA damage</keyword>
<keyword id="KW-0234">DNA repair</keyword>
<keyword id="KW-1017">Isopeptide bond</keyword>
<keyword id="KW-0539">Nucleus</keyword>
<keyword id="KW-0597">Phosphoprotein</keyword>
<keyword id="KW-1185">Reference proteome</keyword>
<keyword id="KW-0832">Ubl conjugation</keyword>
<sequence>MVRTKANSVPGSYRKVVASRAPRKVLGSSTSAANSTPLSSRKAENKYAGGNPVCVRPTPKWQKGIGEFFSLSPKDSEKENRIPEEAGSSGLGKAKRKACPLPPDHTDDEKE</sequence>
<name>PAF15_BOVIN</name>